<protein>
    <recommendedName>
        <fullName evidence="1">Large ribosomal subunit protein uL3</fullName>
    </recommendedName>
    <alternativeName>
        <fullName evidence="3">50S ribosomal protein L3</fullName>
    </alternativeName>
</protein>
<dbReference type="EMBL" id="AE017282">
    <property type="protein sequence ID" value="AAU91600.1"/>
    <property type="molecule type" value="Genomic_DNA"/>
</dbReference>
<dbReference type="RefSeq" id="WP_010961600.1">
    <property type="nucleotide sequence ID" value="NC_002977.6"/>
</dbReference>
<dbReference type="SMR" id="Q605B2"/>
<dbReference type="STRING" id="243233.MCA2372"/>
<dbReference type="GeneID" id="88224574"/>
<dbReference type="KEGG" id="mca:MCA2372"/>
<dbReference type="eggNOG" id="COG0087">
    <property type="taxonomic scope" value="Bacteria"/>
</dbReference>
<dbReference type="HOGENOM" id="CLU_044142_4_1_6"/>
<dbReference type="Proteomes" id="UP000006821">
    <property type="component" value="Chromosome"/>
</dbReference>
<dbReference type="GO" id="GO:0022625">
    <property type="term" value="C:cytosolic large ribosomal subunit"/>
    <property type="evidence" value="ECO:0007669"/>
    <property type="project" value="TreeGrafter"/>
</dbReference>
<dbReference type="GO" id="GO:0019843">
    <property type="term" value="F:rRNA binding"/>
    <property type="evidence" value="ECO:0007669"/>
    <property type="project" value="UniProtKB-UniRule"/>
</dbReference>
<dbReference type="GO" id="GO:0003735">
    <property type="term" value="F:structural constituent of ribosome"/>
    <property type="evidence" value="ECO:0007669"/>
    <property type="project" value="InterPro"/>
</dbReference>
<dbReference type="GO" id="GO:0006412">
    <property type="term" value="P:translation"/>
    <property type="evidence" value="ECO:0007669"/>
    <property type="project" value="UniProtKB-UniRule"/>
</dbReference>
<dbReference type="FunFam" id="2.40.30.10:FF:000004">
    <property type="entry name" value="50S ribosomal protein L3"/>
    <property type="match status" value="1"/>
</dbReference>
<dbReference type="FunFam" id="3.30.160.810:FF:000001">
    <property type="entry name" value="50S ribosomal protein L3"/>
    <property type="match status" value="1"/>
</dbReference>
<dbReference type="Gene3D" id="3.30.160.810">
    <property type="match status" value="1"/>
</dbReference>
<dbReference type="Gene3D" id="2.40.30.10">
    <property type="entry name" value="Translation factors"/>
    <property type="match status" value="1"/>
</dbReference>
<dbReference type="HAMAP" id="MF_01325_B">
    <property type="entry name" value="Ribosomal_uL3_B"/>
    <property type="match status" value="1"/>
</dbReference>
<dbReference type="InterPro" id="IPR000597">
    <property type="entry name" value="Ribosomal_uL3"/>
</dbReference>
<dbReference type="InterPro" id="IPR019927">
    <property type="entry name" value="Ribosomal_uL3_bac/org-type"/>
</dbReference>
<dbReference type="InterPro" id="IPR019926">
    <property type="entry name" value="Ribosomal_uL3_CS"/>
</dbReference>
<dbReference type="InterPro" id="IPR009000">
    <property type="entry name" value="Transl_B-barrel_sf"/>
</dbReference>
<dbReference type="NCBIfam" id="TIGR03625">
    <property type="entry name" value="L3_bact"/>
    <property type="match status" value="1"/>
</dbReference>
<dbReference type="PANTHER" id="PTHR11229">
    <property type="entry name" value="50S RIBOSOMAL PROTEIN L3"/>
    <property type="match status" value="1"/>
</dbReference>
<dbReference type="PANTHER" id="PTHR11229:SF16">
    <property type="entry name" value="LARGE RIBOSOMAL SUBUNIT PROTEIN UL3C"/>
    <property type="match status" value="1"/>
</dbReference>
<dbReference type="Pfam" id="PF00297">
    <property type="entry name" value="Ribosomal_L3"/>
    <property type="match status" value="1"/>
</dbReference>
<dbReference type="SUPFAM" id="SSF50447">
    <property type="entry name" value="Translation proteins"/>
    <property type="match status" value="1"/>
</dbReference>
<dbReference type="PROSITE" id="PS00474">
    <property type="entry name" value="RIBOSOMAL_L3"/>
    <property type="match status" value="1"/>
</dbReference>
<name>RL3_METCA</name>
<keyword id="KW-0488">Methylation</keyword>
<keyword id="KW-1185">Reference proteome</keyword>
<keyword id="KW-0687">Ribonucleoprotein</keyword>
<keyword id="KW-0689">Ribosomal protein</keyword>
<keyword id="KW-0694">RNA-binding</keyword>
<keyword id="KW-0699">rRNA-binding</keyword>
<gene>
    <name evidence="1" type="primary">rplC</name>
    <name type="ordered locus">MCA2372</name>
</gene>
<accession>Q605B2</accession>
<sequence length="211" mass="22483">MAIGLVGRKCGMTHIFTDAGAAVPVTVIHVEPNRVVQVKTLESDGYRAIQVTTGSKKRSRLTKADAGHYSKAGVEAGRGLWEFRLEDSDQDYTVGTELGVGVFAEGQFVDARARSIGKGFAGVVKRHNFRTQDATHGNSLSHRAPGSIGQNQTPGRVFKGKRMAGHMGDKNITVPNLRIVGIDAERSLLLVKGAVPGTKGADVIVRPAAKK</sequence>
<feature type="chain" id="PRO_0000241365" description="Large ribosomal subunit protein uL3">
    <location>
        <begin position="1"/>
        <end position="211"/>
    </location>
</feature>
<feature type="region of interest" description="Disordered" evidence="2">
    <location>
        <begin position="134"/>
        <end position="155"/>
    </location>
</feature>
<feature type="modified residue" description="N5-methylglutamine" evidence="1">
    <location>
        <position position="152"/>
    </location>
</feature>
<evidence type="ECO:0000255" key="1">
    <source>
        <dbReference type="HAMAP-Rule" id="MF_01325"/>
    </source>
</evidence>
<evidence type="ECO:0000256" key="2">
    <source>
        <dbReference type="SAM" id="MobiDB-lite"/>
    </source>
</evidence>
<evidence type="ECO:0000305" key="3"/>
<organism>
    <name type="scientific">Methylococcus capsulatus (strain ATCC 33009 / NCIMB 11132 / Bath)</name>
    <dbReference type="NCBI Taxonomy" id="243233"/>
    <lineage>
        <taxon>Bacteria</taxon>
        <taxon>Pseudomonadati</taxon>
        <taxon>Pseudomonadota</taxon>
        <taxon>Gammaproteobacteria</taxon>
        <taxon>Methylococcales</taxon>
        <taxon>Methylococcaceae</taxon>
        <taxon>Methylococcus</taxon>
    </lineage>
</organism>
<comment type="function">
    <text evidence="1">One of the primary rRNA binding proteins, it binds directly near the 3'-end of the 23S rRNA, where it nucleates assembly of the 50S subunit.</text>
</comment>
<comment type="subunit">
    <text evidence="1">Part of the 50S ribosomal subunit. Forms a cluster with proteins L14 and L19.</text>
</comment>
<comment type="PTM">
    <text evidence="1">Methylated by PrmB.</text>
</comment>
<comment type="similarity">
    <text evidence="1">Belongs to the universal ribosomal protein uL3 family.</text>
</comment>
<reference key="1">
    <citation type="journal article" date="2004" name="PLoS Biol.">
        <title>Genomic insights into methanotrophy: the complete genome sequence of Methylococcus capsulatus (Bath).</title>
        <authorList>
            <person name="Ward N.L."/>
            <person name="Larsen O."/>
            <person name="Sakwa J."/>
            <person name="Bruseth L."/>
            <person name="Khouri H.M."/>
            <person name="Durkin A.S."/>
            <person name="Dimitrov G."/>
            <person name="Jiang L."/>
            <person name="Scanlan D."/>
            <person name="Kang K.H."/>
            <person name="Lewis M.R."/>
            <person name="Nelson K.E."/>
            <person name="Methe B.A."/>
            <person name="Wu M."/>
            <person name="Heidelberg J.F."/>
            <person name="Paulsen I.T."/>
            <person name="Fouts D.E."/>
            <person name="Ravel J."/>
            <person name="Tettelin H."/>
            <person name="Ren Q."/>
            <person name="Read T.D."/>
            <person name="DeBoy R.T."/>
            <person name="Seshadri R."/>
            <person name="Salzberg S.L."/>
            <person name="Jensen H.B."/>
            <person name="Birkeland N.K."/>
            <person name="Nelson W.C."/>
            <person name="Dodson R.J."/>
            <person name="Grindhaug S.H."/>
            <person name="Holt I.E."/>
            <person name="Eidhammer I."/>
            <person name="Jonasen I."/>
            <person name="Vanaken S."/>
            <person name="Utterback T.R."/>
            <person name="Feldblyum T.V."/>
            <person name="Fraser C.M."/>
            <person name="Lillehaug J.R."/>
            <person name="Eisen J.A."/>
        </authorList>
    </citation>
    <scope>NUCLEOTIDE SEQUENCE [LARGE SCALE GENOMIC DNA]</scope>
    <source>
        <strain>ATCC 33009 / NCIMB 11132 / Bath</strain>
    </source>
</reference>
<proteinExistence type="inferred from homology"/>